<sequence>MTKEQQLAERIIAAVGGMDNIDSVMNCMTRVRIKVLDENKVDDQELRHIDGVMGVIHDERIQVVVGPGTVNKVANHMAELSGVKLGDPIPHHHNDSEKMDYKSYAADKAKANKEAHKAKQKNGKLNKVLKSIANIFIPLIPAFIGAGLIGGIAAVLSNLMVAGYISGAWITQLITVFNVIKDGMLAYLAIFTGINAAKEFGATPGLGGVIGGTTLLTGIAGKNILMNVFTGEPLQPGQGGIIGVIFAVWILSIVEKRLHKIVPNAIDIIVTPTIALLIVGLLTIFIFMPLAGFVSDSLVSVVNGIISIGGVFSGFIIGASFLPLVMLGLHHIFTPIHIEMINQSGATYLLPIAAMAGAGQVGAALALWVRCKRNTTLRNTLKGALPVGFLGIGEPLIYGVTLPLGRPFLTACIGGGIGGAVIGGIGHIGAKAIGPSGVSLLPLISDNMYLGYIAGLLAAYAGGFVCTYLFGTTKAMRQTDLLGD</sequence>
<feature type="chain" id="PRO_0000272172" description="PTS system MurNAc-GlcNAc-specific EIIBC component">
    <location>
        <begin position="1"/>
        <end position="484"/>
    </location>
</feature>
<feature type="transmembrane region" description="Helical" evidence="2">
    <location>
        <begin position="135"/>
        <end position="155"/>
    </location>
</feature>
<feature type="transmembrane region" description="Helical" evidence="2">
    <location>
        <begin position="160"/>
        <end position="180"/>
    </location>
</feature>
<feature type="transmembrane region" description="Helical" evidence="2">
    <location>
        <begin position="200"/>
        <end position="220"/>
    </location>
</feature>
<feature type="transmembrane region" description="Helical" evidence="2">
    <location>
        <begin position="234"/>
        <end position="254"/>
    </location>
</feature>
<feature type="transmembrane region" description="Helical" evidence="2">
    <location>
        <begin position="274"/>
        <end position="294"/>
    </location>
</feature>
<feature type="transmembrane region" description="Helical" evidence="2">
    <location>
        <begin position="305"/>
        <end position="325"/>
    </location>
</feature>
<feature type="transmembrane region" description="Helical" evidence="2">
    <location>
        <begin position="349"/>
        <end position="369"/>
    </location>
</feature>
<feature type="transmembrane region" description="Helical" evidence="2">
    <location>
        <begin position="384"/>
        <end position="404"/>
    </location>
</feature>
<feature type="transmembrane region" description="Helical" evidence="2">
    <location>
        <begin position="408"/>
        <end position="428"/>
    </location>
</feature>
<feature type="transmembrane region" description="Helical" evidence="2">
    <location>
        <begin position="450"/>
        <end position="470"/>
    </location>
</feature>
<feature type="domain" description="PTS EIIB type-1" evidence="1">
    <location>
        <begin position="5"/>
        <end position="87"/>
    </location>
</feature>
<feature type="domain" description="PTS EIIC type-1" evidence="2">
    <location>
        <begin position="130"/>
        <end position="484"/>
    </location>
</feature>
<feature type="active site" description="Phosphocysteine intermediate; for EIIB activity" evidence="1">
    <location>
        <position position="27"/>
    </location>
</feature>
<protein>
    <recommendedName>
        <fullName evidence="5">PTS system MurNAc-GlcNAc-specific EIIBC component</fullName>
    </recommendedName>
    <domain>
        <recommendedName>
            <fullName evidence="5">MurNAc-GlcNAc-specific phosphotransferase enzyme IIB component</fullName>
            <ecNumber evidence="5">2.7.1.-</ecNumber>
        </recommendedName>
        <alternativeName>
            <fullName evidence="5">PTS system MurNAc-GlcNAc-specific EIIB component</fullName>
        </alternativeName>
    </domain>
    <domain>
        <recommendedName>
            <fullName evidence="5">MurNAc-GlcNAc permease IIC component</fullName>
        </recommendedName>
        <alternativeName>
            <fullName evidence="5">PTS system MurNAc-GlcNAc-specific EIIC component</fullName>
        </alternativeName>
    </domain>
</protein>
<reference key="1">
    <citation type="journal article" date="2006" name="Lancet">
        <title>Complete genome sequence of USA300, an epidemic clone of community-acquired meticillin-resistant Staphylococcus aureus.</title>
        <authorList>
            <person name="Diep B.A."/>
            <person name="Gill S.R."/>
            <person name="Chang R.F."/>
            <person name="Phan T.H."/>
            <person name="Chen J.H."/>
            <person name="Davidson M.G."/>
            <person name="Lin F."/>
            <person name="Lin J."/>
            <person name="Carleton H.A."/>
            <person name="Mongodin E.F."/>
            <person name="Sensabaugh G.F."/>
            <person name="Perdreau-Remington F."/>
        </authorList>
    </citation>
    <scope>NUCLEOTIDE SEQUENCE [LARGE SCALE GENOMIC DNA]</scope>
    <source>
        <strain>USA300</strain>
    </source>
</reference>
<reference key="2">
    <citation type="journal article" date="2018" name="Front. Microbiol.">
        <title>Recovery of the Peptidoglycan Turnover Product Released by the Autolysin Atl in Staphylococcus aureus Involves the Phosphotransferase System Transporter MurP and the Novel 6-phospho-N-acetylmuramidase MupG.</title>
        <authorList>
            <person name="Kluj R.M."/>
            <person name="Ebner P."/>
            <person name="Adamek M."/>
            <person name="Ziemert N."/>
            <person name="Mayer C."/>
            <person name="Borisova M."/>
        </authorList>
    </citation>
    <scope>FUNCTION</scope>
    <scope>CATALYTIC ACTIVITY</scope>
    <scope>DISRUPTION PHENOTYPE</scope>
    <scope>PATHWAY</scope>
    <source>
        <strain>USA300</strain>
    </source>
</reference>
<organism>
    <name type="scientific">Staphylococcus aureus (strain USA300)</name>
    <dbReference type="NCBI Taxonomy" id="367830"/>
    <lineage>
        <taxon>Bacteria</taxon>
        <taxon>Bacillati</taxon>
        <taxon>Bacillota</taxon>
        <taxon>Bacilli</taxon>
        <taxon>Bacillales</taxon>
        <taxon>Staphylococcaceae</taxon>
        <taxon>Staphylococcus</taxon>
    </lineage>
</organism>
<proteinExistence type="evidence at protein level"/>
<keyword id="KW-1003">Cell membrane</keyword>
<keyword id="KW-0418">Kinase</keyword>
<keyword id="KW-0472">Membrane</keyword>
<keyword id="KW-0598">Phosphotransferase system</keyword>
<keyword id="KW-0762">Sugar transport</keyword>
<keyword id="KW-0808">Transferase</keyword>
<keyword id="KW-0812">Transmembrane</keyword>
<keyword id="KW-1133">Transmembrane helix</keyword>
<keyword id="KW-0813">Transport</keyword>
<evidence type="ECO:0000255" key="1">
    <source>
        <dbReference type="PROSITE-ProRule" id="PRU00421"/>
    </source>
</evidence>
<evidence type="ECO:0000255" key="2">
    <source>
        <dbReference type="PROSITE-ProRule" id="PRU00426"/>
    </source>
</evidence>
<evidence type="ECO:0000269" key="3">
    <source>
    </source>
</evidence>
<evidence type="ECO:0000303" key="4">
    <source>
    </source>
</evidence>
<evidence type="ECO:0000305" key="5">
    <source>
    </source>
</evidence>
<name>PTXBC_STAA3</name>
<dbReference type="EC" id="2.7.1.-" evidence="5"/>
<dbReference type="EMBL" id="CP000255">
    <property type="protein sequence ID" value="ABD20440.1"/>
    <property type="molecule type" value="Genomic_DNA"/>
</dbReference>
<dbReference type="RefSeq" id="WP_000159750.1">
    <property type="nucleotide sequence ID" value="NZ_CP027476.1"/>
</dbReference>
<dbReference type="SMR" id="Q2FK70"/>
<dbReference type="KEGG" id="saa:SAUSA300_0194"/>
<dbReference type="HOGENOM" id="CLU_012312_2_0_9"/>
<dbReference type="OMA" id="SITNCMT"/>
<dbReference type="UniPathway" id="UPA00544"/>
<dbReference type="Proteomes" id="UP000001939">
    <property type="component" value="Chromosome"/>
</dbReference>
<dbReference type="GO" id="GO:0005886">
    <property type="term" value="C:plasma membrane"/>
    <property type="evidence" value="ECO:0007669"/>
    <property type="project" value="UniProtKB-SubCell"/>
</dbReference>
<dbReference type="GO" id="GO:0016301">
    <property type="term" value="F:kinase activity"/>
    <property type="evidence" value="ECO:0007669"/>
    <property type="project" value="UniProtKB-KW"/>
</dbReference>
<dbReference type="GO" id="GO:0008982">
    <property type="term" value="F:protein-N(PI)-phosphohistidine-sugar phosphotransferase activity"/>
    <property type="evidence" value="ECO:0007669"/>
    <property type="project" value="InterPro"/>
</dbReference>
<dbReference type="GO" id="GO:0090588">
    <property type="term" value="F:protein-phosphocysteine-N-acetylmuramate phosphotransferase system transporter activity"/>
    <property type="evidence" value="ECO:0007669"/>
    <property type="project" value="TreeGrafter"/>
</dbReference>
<dbReference type="GO" id="GO:0009254">
    <property type="term" value="P:peptidoglycan turnover"/>
    <property type="evidence" value="ECO:0007669"/>
    <property type="project" value="UniProtKB-UniPathway"/>
</dbReference>
<dbReference type="GO" id="GO:0009401">
    <property type="term" value="P:phosphoenolpyruvate-dependent sugar phosphotransferase system"/>
    <property type="evidence" value="ECO:0007669"/>
    <property type="project" value="UniProtKB-KW"/>
</dbReference>
<dbReference type="CDD" id="cd00212">
    <property type="entry name" value="PTS_IIB_glc"/>
    <property type="match status" value="1"/>
</dbReference>
<dbReference type="FunFam" id="3.30.1360.60:FF:000001">
    <property type="entry name" value="PTS system glucose-specific IIBC component PtsG"/>
    <property type="match status" value="1"/>
</dbReference>
<dbReference type="Gene3D" id="3.30.1360.60">
    <property type="entry name" value="Glucose permease domain IIB"/>
    <property type="match status" value="1"/>
</dbReference>
<dbReference type="InterPro" id="IPR036878">
    <property type="entry name" value="Glu_permease_IIB"/>
</dbReference>
<dbReference type="InterPro" id="IPR018113">
    <property type="entry name" value="PTrfase_EIIB_Cys"/>
</dbReference>
<dbReference type="InterPro" id="IPR003352">
    <property type="entry name" value="PTS_EIIC"/>
</dbReference>
<dbReference type="InterPro" id="IPR013013">
    <property type="entry name" value="PTS_EIIC_1"/>
</dbReference>
<dbReference type="InterPro" id="IPR001996">
    <property type="entry name" value="PTS_IIB_1"/>
</dbReference>
<dbReference type="InterPro" id="IPR050558">
    <property type="entry name" value="PTS_Sugar-Specific_Components"/>
</dbReference>
<dbReference type="PANTHER" id="PTHR30175">
    <property type="entry name" value="PHOSPHOTRANSFERASE SYSTEM TRANSPORT PROTEIN"/>
    <property type="match status" value="1"/>
</dbReference>
<dbReference type="PANTHER" id="PTHR30175:SF3">
    <property type="entry name" value="PTS SYSTEM N-ACETYLMURAMIC ACID-SPECIFIC EIIBC COMPONENT"/>
    <property type="match status" value="1"/>
</dbReference>
<dbReference type="Pfam" id="PF00367">
    <property type="entry name" value="PTS_EIIB"/>
    <property type="match status" value="1"/>
</dbReference>
<dbReference type="Pfam" id="PF02378">
    <property type="entry name" value="PTS_EIIC"/>
    <property type="match status" value="1"/>
</dbReference>
<dbReference type="SUPFAM" id="SSF55604">
    <property type="entry name" value="Glucose permease domain IIB"/>
    <property type="match status" value="1"/>
</dbReference>
<dbReference type="PROSITE" id="PS51098">
    <property type="entry name" value="PTS_EIIB_TYPE_1"/>
    <property type="match status" value="1"/>
</dbReference>
<dbReference type="PROSITE" id="PS01035">
    <property type="entry name" value="PTS_EIIB_TYPE_1_CYS"/>
    <property type="match status" value="1"/>
</dbReference>
<dbReference type="PROSITE" id="PS51103">
    <property type="entry name" value="PTS_EIIC_TYPE_1"/>
    <property type="match status" value="1"/>
</dbReference>
<gene>
    <name evidence="4" type="primary">murP</name>
    <name type="ordered locus">SAUSA300_0194</name>
</gene>
<accession>Q2FK70</accession>
<comment type="function">
    <text evidence="3">The phosphoenolpyruvate-dependent sugar phosphotransferase system (sugar PTS), a major carbohydrate active transport system, catalyzes the phosphorylation of incoming sugar substrates concomitantly with their translocation across the cell membrane. This system is involved in the uptake and phosphorylation of MurNAc-GlcNAc, the principle peptidoglycan turnover product of S.aureus, yielding cytoplasmic MurNAc 6P-GlcNAc.</text>
</comment>
<comment type="catalytic activity">
    <reaction evidence="5">
        <text>N-acetyl-beta-D-muramate-(1-&gt;4)-N-acetyl-D-glucosamine(out) + N(pros)-phospho-L-histidyl-[protein] = 6-phospho-N-acetyl-beta-D-muramate-(1-&gt;4)-N-acetyl-D-glucosamine(in) + L-histidyl-[protein]</text>
        <dbReference type="Rhea" id="RHEA:66784"/>
        <dbReference type="Rhea" id="RHEA-COMP:9745"/>
        <dbReference type="Rhea" id="RHEA-COMP:9746"/>
        <dbReference type="ChEBI" id="CHEBI:29979"/>
        <dbReference type="ChEBI" id="CHEBI:64837"/>
        <dbReference type="ChEBI" id="CHEBI:167476"/>
        <dbReference type="ChEBI" id="CHEBI:167477"/>
    </reaction>
    <physiologicalReaction direction="left-to-right" evidence="5">
        <dbReference type="Rhea" id="RHEA:66785"/>
    </physiologicalReaction>
</comment>
<comment type="pathway">
    <text evidence="5">Cell wall biogenesis; peptidoglycan recycling.</text>
</comment>
<comment type="subcellular location">
    <subcellularLocation>
        <location evidence="2">Cell membrane</location>
        <topology evidence="2">Multi-pass membrane protein</topology>
    </subcellularLocation>
</comment>
<comment type="domain">
    <text>The EIIB domain is phosphorylated by phospho-EIIA on a cysteinyl or histidyl residue, depending on the transported sugar. Then, it transfers the phosphoryl group to the sugar substrate concomitantly with the sugar uptake processed by the EIIC domain.</text>
</comment>
<comment type="domain">
    <text>The EIIC domain forms the PTS system translocation channel and contains the specific substrate-binding site.</text>
</comment>
<comment type="disruption phenotype">
    <text evidence="3">Cells lacking this gene show an extracellular accumulation of the disaccharide turnover product MurNAc-GlcNAc, but do not accumulate MurNAc.</text>
</comment>